<keyword id="KW-0066">ATP synthesis</keyword>
<keyword id="KW-1003">Cell membrane</keyword>
<keyword id="KW-0139">CF(1)</keyword>
<keyword id="KW-0375">Hydrogen ion transport</keyword>
<keyword id="KW-0406">Ion transport</keyword>
<keyword id="KW-0472">Membrane</keyword>
<keyword id="KW-1185">Reference proteome</keyword>
<keyword id="KW-0813">Transport</keyword>
<protein>
    <recommendedName>
        <fullName evidence="1">ATP synthase gamma chain</fullName>
    </recommendedName>
    <alternativeName>
        <fullName evidence="1">ATP synthase F1 sector gamma subunit</fullName>
    </alternativeName>
    <alternativeName>
        <fullName evidence="1">F-ATPase gamma subunit</fullName>
    </alternativeName>
</protein>
<comment type="function">
    <text evidence="1">Produces ATP from ADP in the presence of a proton gradient across the membrane. The gamma chain is believed to be important in regulating ATPase activity and the flow of protons through the CF(0) complex.</text>
</comment>
<comment type="subunit">
    <text evidence="1">F-type ATPases have 2 components, CF(1) - the catalytic core - and CF(0) - the membrane proton channel. CF(1) has five subunits: alpha(3), beta(3), gamma(1), delta(1), epsilon(1). CF(0) has three main subunits: a, b and c.</text>
</comment>
<comment type="subcellular location">
    <subcellularLocation>
        <location evidence="1">Cell membrane</location>
        <topology evidence="1">Peripheral membrane protein</topology>
    </subcellularLocation>
</comment>
<comment type="similarity">
    <text evidence="1">Belongs to the ATPase gamma chain family.</text>
</comment>
<organism>
    <name type="scientific">Salinispora tropica (strain ATCC BAA-916 / DSM 44818 / JCM 13857 / NBRC 105044 / CNB-440)</name>
    <dbReference type="NCBI Taxonomy" id="369723"/>
    <lineage>
        <taxon>Bacteria</taxon>
        <taxon>Bacillati</taxon>
        <taxon>Actinomycetota</taxon>
        <taxon>Actinomycetes</taxon>
        <taxon>Micromonosporales</taxon>
        <taxon>Micromonosporaceae</taxon>
        <taxon>Salinispora</taxon>
    </lineage>
</organism>
<dbReference type="EMBL" id="CP000667">
    <property type="protein sequence ID" value="ABP56062.1"/>
    <property type="molecule type" value="Genomic_DNA"/>
</dbReference>
<dbReference type="RefSeq" id="WP_012014837.1">
    <property type="nucleotide sequence ID" value="NC_009380.1"/>
</dbReference>
<dbReference type="SMR" id="A4XAW3"/>
<dbReference type="STRING" id="369723.Strop_3631"/>
<dbReference type="KEGG" id="stp:Strop_3631"/>
<dbReference type="PATRIC" id="fig|369723.5.peg.3746"/>
<dbReference type="eggNOG" id="COG0224">
    <property type="taxonomic scope" value="Bacteria"/>
</dbReference>
<dbReference type="HOGENOM" id="CLU_050669_0_0_11"/>
<dbReference type="Proteomes" id="UP000000235">
    <property type="component" value="Chromosome"/>
</dbReference>
<dbReference type="GO" id="GO:0005886">
    <property type="term" value="C:plasma membrane"/>
    <property type="evidence" value="ECO:0007669"/>
    <property type="project" value="UniProtKB-SubCell"/>
</dbReference>
<dbReference type="GO" id="GO:0045259">
    <property type="term" value="C:proton-transporting ATP synthase complex"/>
    <property type="evidence" value="ECO:0007669"/>
    <property type="project" value="UniProtKB-KW"/>
</dbReference>
<dbReference type="GO" id="GO:0005524">
    <property type="term" value="F:ATP binding"/>
    <property type="evidence" value="ECO:0007669"/>
    <property type="project" value="UniProtKB-UniRule"/>
</dbReference>
<dbReference type="GO" id="GO:0046933">
    <property type="term" value="F:proton-transporting ATP synthase activity, rotational mechanism"/>
    <property type="evidence" value="ECO:0007669"/>
    <property type="project" value="UniProtKB-UniRule"/>
</dbReference>
<dbReference type="GO" id="GO:0042777">
    <property type="term" value="P:proton motive force-driven plasma membrane ATP synthesis"/>
    <property type="evidence" value="ECO:0007669"/>
    <property type="project" value="UniProtKB-UniRule"/>
</dbReference>
<dbReference type="CDD" id="cd12151">
    <property type="entry name" value="F1-ATPase_gamma"/>
    <property type="match status" value="1"/>
</dbReference>
<dbReference type="Gene3D" id="3.40.1380.10">
    <property type="match status" value="1"/>
</dbReference>
<dbReference type="Gene3D" id="1.10.287.80">
    <property type="entry name" value="ATP synthase, gamma subunit, helix hairpin domain"/>
    <property type="match status" value="2"/>
</dbReference>
<dbReference type="HAMAP" id="MF_00815">
    <property type="entry name" value="ATP_synth_gamma_bact"/>
    <property type="match status" value="1"/>
</dbReference>
<dbReference type="InterPro" id="IPR035968">
    <property type="entry name" value="ATP_synth_F1_ATPase_gsu"/>
</dbReference>
<dbReference type="InterPro" id="IPR000131">
    <property type="entry name" value="ATP_synth_F1_gsu"/>
</dbReference>
<dbReference type="InterPro" id="IPR023632">
    <property type="entry name" value="ATP_synth_F1_gsu_CS"/>
</dbReference>
<dbReference type="NCBIfam" id="TIGR01146">
    <property type="entry name" value="ATPsyn_F1gamma"/>
    <property type="match status" value="1"/>
</dbReference>
<dbReference type="NCBIfam" id="NF004145">
    <property type="entry name" value="PRK05621.1-2"/>
    <property type="match status" value="1"/>
</dbReference>
<dbReference type="PANTHER" id="PTHR11693">
    <property type="entry name" value="ATP SYNTHASE GAMMA CHAIN"/>
    <property type="match status" value="1"/>
</dbReference>
<dbReference type="PANTHER" id="PTHR11693:SF22">
    <property type="entry name" value="ATP SYNTHASE SUBUNIT GAMMA, MITOCHONDRIAL"/>
    <property type="match status" value="1"/>
</dbReference>
<dbReference type="Pfam" id="PF00231">
    <property type="entry name" value="ATP-synt"/>
    <property type="match status" value="1"/>
</dbReference>
<dbReference type="PRINTS" id="PR00126">
    <property type="entry name" value="ATPASEGAMMA"/>
</dbReference>
<dbReference type="SUPFAM" id="SSF52943">
    <property type="entry name" value="ATP synthase (F1-ATPase), gamma subunit"/>
    <property type="match status" value="1"/>
</dbReference>
<dbReference type="PROSITE" id="PS00153">
    <property type="entry name" value="ATPASE_GAMMA"/>
    <property type="match status" value="1"/>
</dbReference>
<reference key="1">
    <citation type="journal article" date="2007" name="Proc. Natl. Acad. Sci. U.S.A.">
        <title>Genome sequencing reveals complex secondary metabolome in the marine actinomycete Salinispora tropica.</title>
        <authorList>
            <person name="Udwary D.W."/>
            <person name="Zeigler L."/>
            <person name="Asolkar R.N."/>
            <person name="Singan V."/>
            <person name="Lapidus A."/>
            <person name="Fenical W."/>
            <person name="Jensen P.R."/>
            <person name="Moore B.S."/>
        </authorList>
    </citation>
    <scope>NUCLEOTIDE SEQUENCE [LARGE SCALE GENOMIC DNA]</scope>
    <source>
        <strain>ATCC BAA-916 / DSM 44818 / JCM 13857 / NBRC 105044 / CNB-440</strain>
    </source>
</reference>
<proteinExistence type="inferred from homology"/>
<gene>
    <name evidence="1" type="primary">atpG</name>
    <name type="ordered locus">Strop_3631</name>
</gene>
<accession>A4XAW3</accession>
<name>ATPG_SALTO</name>
<feature type="chain" id="PRO_1000083807" description="ATP synthase gamma chain">
    <location>
        <begin position="1"/>
        <end position="309"/>
    </location>
</feature>
<evidence type="ECO:0000255" key="1">
    <source>
        <dbReference type="HAMAP-Rule" id="MF_00815"/>
    </source>
</evidence>
<sequence length="309" mass="33648">MAAQVRVLRQRIRAAKSMKKITKAMELVATSRIAKAQEQVAASLPYSRAITEVLTALASNTRIDHPLLTPRERVRRAGVLLVTSDRGLAGGYSSNAIKTAESLLARLRADGKEPSLYVIGRKGVQYYRFRNRPMMACWTGFSEQPTFADAREVGETLIKAFTAGVDDGDGDPGPDGVFGVDELHIVSTEFKSLMTQVPVPKILGPMQIEDRPRSEGILPAYEFEPEAEALLDALLPKYINTRIYAALVESAASESASRRRAMKSATDNAEEMIEKYTREMNSARQAGITQEISEIVGGANALAASGSEV</sequence>